<keyword id="KW-0349">Heme</keyword>
<keyword id="KW-0376">Hydrogen peroxide</keyword>
<keyword id="KW-0408">Iron</keyword>
<keyword id="KW-0479">Metal-binding</keyword>
<keyword id="KW-0560">Oxidoreductase</keyword>
<keyword id="KW-0575">Peroxidase</keyword>
<keyword id="KW-1185">Reference proteome</keyword>
<keyword id="KW-0732">Signal</keyword>
<gene>
    <name evidence="1" type="primary">katG</name>
    <name type="ordered locus">azo2989</name>
</gene>
<reference key="1">
    <citation type="journal article" date="2006" name="Nat. Biotechnol.">
        <title>Complete genome of the mutualistic, N2-fixing grass endophyte Azoarcus sp. strain BH72.</title>
        <authorList>
            <person name="Krause A."/>
            <person name="Ramakumar A."/>
            <person name="Bartels D."/>
            <person name="Battistoni F."/>
            <person name="Bekel T."/>
            <person name="Boch J."/>
            <person name="Boehm M."/>
            <person name="Friedrich F."/>
            <person name="Hurek T."/>
            <person name="Krause L."/>
            <person name="Linke B."/>
            <person name="McHardy A.C."/>
            <person name="Sarkar A."/>
            <person name="Schneiker S."/>
            <person name="Syed A.A."/>
            <person name="Thauer R."/>
            <person name="Vorhoelter F.-J."/>
            <person name="Weidner S."/>
            <person name="Puehler A."/>
            <person name="Reinhold-Hurek B."/>
            <person name="Kaiser O."/>
            <person name="Goesmann A."/>
        </authorList>
    </citation>
    <scope>NUCLEOTIDE SEQUENCE [LARGE SCALE GENOMIC DNA]</scope>
    <source>
        <strain>BH72</strain>
    </source>
</reference>
<protein>
    <recommendedName>
        <fullName evidence="1">Catalase-peroxidase</fullName>
        <shortName evidence="1">CP</shortName>
        <ecNumber evidence="1">1.11.1.21</ecNumber>
    </recommendedName>
    <alternativeName>
        <fullName evidence="1">Peroxidase/catalase</fullName>
    </alternativeName>
</protein>
<evidence type="ECO:0000255" key="1">
    <source>
        <dbReference type="HAMAP-Rule" id="MF_01961"/>
    </source>
</evidence>
<proteinExistence type="inferred from homology"/>
<comment type="function">
    <text evidence="1">Bifunctional enzyme with both catalase and broad-spectrum peroxidase activity.</text>
</comment>
<comment type="catalytic activity">
    <reaction evidence="1">
        <text>H2O2 + AH2 = A + 2 H2O</text>
        <dbReference type="Rhea" id="RHEA:30275"/>
        <dbReference type="ChEBI" id="CHEBI:13193"/>
        <dbReference type="ChEBI" id="CHEBI:15377"/>
        <dbReference type="ChEBI" id="CHEBI:16240"/>
        <dbReference type="ChEBI" id="CHEBI:17499"/>
        <dbReference type="EC" id="1.11.1.21"/>
    </reaction>
</comment>
<comment type="catalytic activity">
    <reaction evidence="1">
        <text>2 H2O2 = O2 + 2 H2O</text>
        <dbReference type="Rhea" id="RHEA:20309"/>
        <dbReference type="ChEBI" id="CHEBI:15377"/>
        <dbReference type="ChEBI" id="CHEBI:15379"/>
        <dbReference type="ChEBI" id="CHEBI:16240"/>
        <dbReference type="EC" id="1.11.1.21"/>
    </reaction>
</comment>
<comment type="cofactor">
    <cofactor evidence="1">
        <name>heme b</name>
        <dbReference type="ChEBI" id="CHEBI:60344"/>
    </cofactor>
    <text evidence="1">Binds 1 heme b (iron(II)-protoporphyrin IX) group per dimer.</text>
</comment>
<comment type="subunit">
    <text evidence="1">Homodimer or homotetramer.</text>
</comment>
<comment type="PTM">
    <text evidence="1">Formation of the three residue Trp-Tyr-Met cross-link is important for the catalase, but not the peroxidase activity of the enzyme.</text>
</comment>
<comment type="similarity">
    <text evidence="1">Belongs to the peroxidase family. Peroxidase/catalase subfamily.</text>
</comment>
<dbReference type="EC" id="1.11.1.21" evidence="1"/>
<dbReference type="EMBL" id="AM406670">
    <property type="protein sequence ID" value="CAL95605.1"/>
    <property type="molecule type" value="Genomic_DNA"/>
</dbReference>
<dbReference type="RefSeq" id="WP_011766714.1">
    <property type="nucleotide sequence ID" value="NC_008702.1"/>
</dbReference>
<dbReference type="SMR" id="A1K9V0"/>
<dbReference type="STRING" id="62928.azo2989"/>
<dbReference type="KEGG" id="azo:azo2989"/>
<dbReference type="eggNOG" id="COG0376">
    <property type="taxonomic scope" value="Bacteria"/>
</dbReference>
<dbReference type="HOGENOM" id="CLU_025424_2_0_4"/>
<dbReference type="Proteomes" id="UP000002588">
    <property type="component" value="Chromosome"/>
</dbReference>
<dbReference type="GO" id="GO:0005829">
    <property type="term" value="C:cytosol"/>
    <property type="evidence" value="ECO:0007669"/>
    <property type="project" value="TreeGrafter"/>
</dbReference>
<dbReference type="GO" id="GO:0004096">
    <property type="term" value="F:catalase activity"/>
    <property type="evidence" value="ECO:0007669"/>
    <property type="project" value="UniProtKB-UniRule"/>
</dbReference>
<dbReference type="GO" id="GO:0020037">
    <property type="term" value="F:heme binding"/>
    <property type="evidence" value="ECO:0007669"/>
    <property type="project" value="InterPro"/>
</dbReference>
<dbReference type="GO" id="GO:0046872">
    <property type="term" value="F:metal ion binding"/>
    <property type="evidence" value="ECO:0007669"/>
    <property type="project" value="UniProtKB-KW"/>
</dbReference>
<dbReference type="GO" id="GO:0070301">
    <property type="term" value="P:cellular response to hydrogen peroxide"/>
    <property type="evidence" value="ECO:0007669"/>
    <property type="project" value="TreeGrafter"/>
</dbReference>
<dbReference type="GO" id="GO:0042744">
    <property type="term" value="P:hydrogen peroxide catabolic process"/>
    <property type="evidence" value="ECO:0007669"/>
    <property type="project" value="UniProtKB-KW"/>
</dbReference>
<dbReference type="CDD" id="cd00649">
    <property type="entry name" value="catalase_peroxidase_1"/>
    <property type="match status" value="1"/>
</dbReference>
<dbReference type="CDD" id="cd08200">
    <property type="entry name" value="catalase_peroxidase_2"/>
    <property type="match status" value="1"/>
</dbReference>
<dbReference type="FunFam" id="1.10.420.10:FF:000002">
    <property type="entry name" value="Catalase-peroxidase"/>
    <property type="match status" value="1"/>
</dbReference>
<dbReference type="FunFam" id="1.10.420.10:FF:000004">
    <property type="entry name" value="Catalase-peroxidase"/>
    <property type="match status" value="1"/>
</dbReference>
<dbReference type="FunFam" id="1.10.520.10:FF:000002">
    <property type="entry name" value="Catalase-peroxidase"/>
    <property type="match status" value="1"/>
</dbReference>
<dbReference type="Gene3D" id="1.10.520.10">
    <property type="match status" value="2"/>
</dbReference>
<dbReference type="Gene3D" id="1.10.420.10">
    <property type="entry name" value="Peroxidase, domain 2"/>
    <property type="match status" value="2"/>
</dbReference>
<dbReference type="HAMAP" id="MF_01961">
    <property type="entry name" value="Catal_peroxid"/>
    <property type="match status" value="1"/>
</dbReference>
<dbReference type="InterPro" id="IPR000763">
    <property type="entry name" value="Catalase_peroxidase"/>
</dbReference>
<dbReference type="InterPro" id="IPR002016">
    <property type="entry name" value="Haem_peroxidase"/>
</dbReference>
<dbReference type="InterPro" id="IPR010255">
    <property type="entry name" value="Haem_peroxidase_sf"/>
</dbReference>
<dbReference type="InterPro" id="IPR019794">
    <property type="entry name" value="Peroxidases_AS"/>
</dbReference>
<dbReference type="InterPro" id="IPR019793">
    <property type="entry name" value="Peroxidases_heam-ligand_BS"/>
</dbReference>
<dbReference type="NCBIfam" id="TIGR00198">
    <property type="entry name" value="cat_per_HPI"/>
    <property type="match status" value="1"/>
</dbReference>
<dbReference type="NCBIfam" id="NF011635">
    <property type="entry name" value="PRK15061.1"/>
    <property type="match status" value="1"/>
</dbReference>
<dbReference type="PANTHER" id="PTHR30555:SF0">
    <property type="entry name" value="CATALASE-PEROXIDASE"/>
    <property type="match status" value="1"/>
</dbReference>
<dbReference type="PANTHER" id="PTHR30555">
    <property type="entry name" value="HYDROPEROXIDASE I, BIFUNCTIONAL CATALASE-PEROXIDASE"/>
    <property type="match status" value="1"/>
</dbReference>
<dbReference type="Pfam" id="PF00141">
    <property type="entry name" value="peroxidase"/>
    <property type="match status" value="2"/>
</dbReference>
<dbReference type="PRINTS" id="PR00460">
    <property type="entry name" value="BPEROXIDASE"/>
</dbReference>
<dbReference type="PRINTS" id="PR00458">
    <property type="entry name" value="PEROXIDASE"/>
</dbReference>
<dbReference type="SUPFAM" id="SSF48113">
    <property type="entry name" value="Heme-dependent peroxidases"/>
    <property type="match status" value="2"/>
</dbReference>
<dbReference type="PROSITE" id="PS00435">
    <property type="entry name" value="PEROXIDASE_1"/>
    <property type="match status" value="1"/>
</dbReference>
<dbReference type="PROSITE" id="PS00436">
    <property type="entry name" value="PEROXIDASE_2"/>
    <property type="match status" value="1"/>
</dbReference>
<dbReference type="PROSITE" id="PS50873">
    <property type="entry name" value="PEROXIDASE_4"/>
    <property type="match status" value="1"/>
</dbReference>
<feature type="signal peptide" evidence="1">
    <location>
        <begin position="1"/>
        <end position="23"/>
    </location>
</feature>
<feature type="chain" id="PRO_0000354722" description="Catalase-peroxidase">
    <location>
        <begin position="24"/>
        <end position="733"/>
    </location>
</feature>
<feature type="active site" description="Proton acceptor" evidence="1">
    <location>
        <position position="97"/>
    </location>
</feature>
<feature type="binding site" description="axial binding residue" evidence="1">
    <location>
        <position position="265"/>
    </location>
    <ligand>
        <name>heme b</name>
        <dbReference type="ChEBI" id="CHEBI:60344"/>
    </ligand>
    <ligandPart>
        <name>Fe</name>
        <dbReference type="ChEBI" id="CHEBI:18248"/>
    </ligandPart>
</feature>
<feature type="site" description="Transition state stabilizer" evidence="1">
    <location>
        <position position="93"/>
    </location>
</feature>
<feature type="cross-link" description="Tryptophyl-tyrosyl-methioninium (Trp-Tyr) (with M-250)" evidence="1">
    <location>
        <begin position="96"/>
        <end position="224"/>
    </location>
</feature>
<feature type="cross-link" description="Tryptophyl-tyrosyl-methioninium (Tyr-Met) (with W-96)" evidence="1">
    <location>
        <begin position="224"/>
        <end position="250"/>
    </location>
</feature>
<organism>
    <name type="scientific">Azoarcus sp. (strain BH72)</name>
    <dbReference type="NCBI Taxonomy" id="418699"/>
    <lineage>
        <taxon>Bacteria</taxon>
        <taxon>Pseudomonadati</taxon>
        <taxon>Pseudomonadota</taxon>
        <taxon>Betaproteobacteria</taxon>
        <taxon>Rhodocyclales</taxon>
        <taxon>Zoogloeaceae</taxon>
        <taxon>Azoarcus</taxon>
    </lineage>
</organism>
<accession>A1K9V0</accession>
<sequence length="733" mass="80011">MNNESKCPFAAAHGVRSPATARANRDWWPNQLNLNILHQHAPASNPLGEDFDYAAEFNTLDLAALKQDLYALMTMSQDWWPADWGHYGGLFIRMAWHSAGTYRTADGRGGGGTGNQRFAPLNSWPDNGNLDKARRLLWPIKQKYGNKISWADLMILAGNCALESMGFKTFGFGGGRADIWQPEEDIYWGAEKEWLATSDKPDSRYSGERQLENPLAAVQMGLIYVNPEGPDGNPDPVASGRDVRETFARMAMNDEETVALVAGGHTFGKAHGAGDPKLVGPEPEGAPIEAQGLGWINSFGTGHGVHTTTSGIEGAWKPNPTKWDNGYFDMLFGYEWALTRSPAGAHQWVAQNVKPEDMIPDAHDPSKKHPPMMTTADLSLRFDPIYEPIARRFHKNPADFADAFARAWFKLTHRDMGPKSRYLGPEVPAEDLIWQDPIPRLDHPLIDAADIATLKAMVLASGVSIAELVSTAWASASTFRGSDMRGGANGARIRLAPQKDWDVNQPAQLAKVLSVLGDIQAGFNAAAPGGKKVSLADLIVLGGCAAVEAAARAAGHVVEVPFTPGRMDASQEQTDVESFAVLEPIADGFRNYQKQVYAVSAEELLVDKAQLLTLSAPEMTVLVGGLRVLGANAGGSPHGVFTRRPQTLSNDFFVNLLDMSTAWKPAGDSFEGRDRKSGELKWTATRVDLVFGSNSQLRALAEVYAQDDAKEKFVRDFVAAWNKVMNLDRFDVK</sequence>
<name>KATG_AZOSB</name>